<accession>P04712</accession>
<name>SUS1_MAIZE</name>
<sequence>MAAKLTRLHSLRERLGATFSSHPNELIALFSRYVHQGKGMLQRHQLLAEFDALFDSDKEKYAPFEDILRAAQEAIVLPPWVALAIRPRPGVWDYIRVNVSELAVEELSVSEYLAFKEQLVDGQSNSNFVLELDFEPFNASFPRPSMSKSIGNGVQFLNRHLSSKLFQDKESLYPLLNFLKAHNYKGTTMMLNDRIQSLRGLQSSLRKAEEYLLSVPQDTPYSEFNHRFQELGLEKGWGDTAKRVLDTLHLLLDLLEAPDPANLEKFLGTIPMMFNVVILSPHGYFAQSNVLGYPDTGGQVVYILDQVRALENEMLLRIKQQGLDITPKILIVTRLLPDAAGTTCGQRLEKVIGTEHTDIIRVPFRNENGILRKWISRFDVWPYLETYTEDVSSEIMKEMQAKPDLIIGNYSDGNLVATLLAHKLGVTQCTIAHALEKTKYPNSDIYLDKFDSQYHFSCQFTADLIAMNHTDFIITSTFQEIAGSKDTVGQYESHIAFTLPGLYRVVHGIDVFDPKFNIVSPGADMSVYYPYTETDKRLTAFHPEIEELIYSDVENSEHKFVLKDKKKPIIFSMARLDRVKNMTGLVEMYGKNARLRELANLVIVAGDHGKESKDREEQAEFKKMYSLIDEYKLKGHIRWISAQMNRVRNGELYRYICDTKGAFVQPAFYEAFGLTVIESMTCGLPTIATCHGGPAEIIVDGVSGLHIDPYHSDKAADILVNFFDKCKADPSYWDEISQGGLQRIYEKYTWKLYSERLMTLTGVYGFWKYVSNLERRETRRYIEMFYALKYRSLASQVPLSFD</sequence>
<keyword id="KW-0328">Glycosyltransferase</keyword>
<keyword id="KW-1185">Reference proteome</keyword>
<keyword id="KW-0808">Transferase</keyword>
<gene>
    <name type="primary">SH-1</name>
</gene>
<proteinExistence type="evidence at transcript level"/>
<protein>
    <recommendedName>
        <fullName>Sucrose synthase 1</fullName>
        <ecNumber>2.4.1.13</ecNumber>
    </recommendedName>
    <alternativeName>
        <fullName>Shrunken-1</fullName>
    </alternativeName>
    <alternativeName>
        <fullName>Sucrose-UDP glucosyltransferase 1</fullName>
    </alternativeName>
</protein>
<comment type="function">
    <text>Sucrose-cleaving enzyme that provides UDP-glucose and fructose for various metabolic pathways. Most active in the sink tissues where it is responsible for the breakdown of the arriving sucrose.</text>
</comment>
<comment type="catalytic activity">
    <reaction>
        <text>an NDP-alpha-D-glucose + D-fructose = a ribonucleoside 5'-diphosphate + sucrose + H(+)</text>
        <dbReference type="Rhea" id="RHEA:16241"/>
        <dbReference type="ChEBI" id="CHEBI:15378"/>
        <dbReference type="ChEBI" id="CHEBI:17992"/>
        <dbReference type="ChEBI" id="CHEBI:37721"/>
        <dbReference type="ChEBI" id="CHEBI:57930"/>
        <dbReference type="ChEBI" id="CHEBI:76533"/>
        <dbReference type="EC" id="2.4.1.13"/>
    </reaction>
</comment>
<comment type="similarity">
    <text evidence="2">Belongs to the glycosyltransferase 1 family. Plant sucrose synthase subfamily.</text>
</comment>
<evidence type="ECO:0000250" key="1">
    <source>
        <dbReference type="UniProtKB" id="P49040"/>
    </source>
</evidence>
<evidence type="ECO:0000305" key="2"/>
<reference key="1">
    <citation type="journal article" date="1985" name="EMBO J.">
        <title>Structure of the sucrose synthase gene on chromosome 9 of Zea mays L.</title>
        <authorList>
            <person name="Werr W."/>
            <person name="Frommer W.-B."/>
            <person name="Maas C."/>
            <person name="Starlinger P."/>
        </authorList>
    </citation>
    <scope>NUCLEOTIDE SEQUENCE</scope>
</reference>
<organism>
    <name type="scientific">Zea mays</name>
    <name type="common">Maize</name>
    <dbReference type="NCBI Taxonomy" id="4577"/>
    <lineage>
        <taxon>Eukaryota</taxon>
        <taxon>Viridiplantae</taxon>
        <taxon>Streptophyta</taxon>
        <taxon>Embryophyta</taxon>
        <taxon>Tracheophyta</taxon>
        <taxon>Spermatophyta</taxon>
        <taxon>Magnoliopsida</taxon>
        <taxon>Liliopsida</taxon>
        <taxon>Poales</taxon>
        <taxon>Poaceae</taxon>
        <taxon>PACMAD clade</taxon>
        <taxon>Panicoideae</taxon>
        <taxon>Andropogonodae</taxon>
        <taxon>Andropogoneae</taxon>
        <taxon>Tripsacinae</taxon>
        <taxon>Zea</taxon>
    </lineage>
</organism>
<dbReference type="EC" id="2.4.1.13"/>
<dbReference type="EMBL" id="X02400">
    <property type="protein sequence ID" value="CAA26247.1"/>
    <property type="molecule type" value="mRNA"/>
</dbReference>
<dbReference type="EMBL" id="X02382">
    <property type="protein sequence ID" value="CAA26229.1"/>
    <property type="molecule type" value="Genomic_DNA"/>
</dbReference>
<dbReference type="PIR" id="S07184">
    <property type="entry name" value="YUZMS"/>
</dbReference>
<dbReference type="RefSeq" id="NP_001105411.2">
    <property type="nucleotide sequence ID" value="NM_001111941.2"/>
</dbReference>
<dbReference type="RefSeq" id="NP_001334812.1">
    <property type="nucleotide sequence ID" value="NM_001347883.1"/>
</dbReference>
<dbReference type="SMR" id="P04712"/>
<dbReference type="FunCoup" id="P04712">
    <property type="interactions" value="198"/>
</dbReference>
<dbReference type="STRING" id="4577.P04712"/>
<dbReference type="CAZy" id="GT4">
    <property type="family name" value="Glycosyltransferase Family 4"/>
</dbReference>
<dbReference type="iPTMnet" id="P04712"/>
<dbReference type="PaxDb" id="4577-GRMZM2G089713_P06"/>
<dbReference type="GeneID" id="542365"/>
<dbReference type="KEGG" id="zma:542365"/>
<dbReference type="MaizeGDB" id="13861"/>
<dbReference type="eggNOG" id="KOG0853">
    <property type="taxonomic scope" value="Eukaryota"/>
</dbReference>
<dbReference type="InParanoid" id="P04712"/>
<dbReference type="OrthoDB" id="937291at2759"/>
<dbReference type="Proteomes" id="UP000007305">
    <property type="component" value="Unplaced"/>
</dbReference>
<dbReference type="ExpressionAtlas" id="P04712">
    <property type="expression patterns" value="baseline and differential"/>
</dbReference>
<dbReference type="GO" id="GO:0016157">
    <property type="term" value="F:sucrose synthase activity"/>
    <property type="evidence" value="ECO:0000318"/>
    <property type="project" value="GO_Central"/>
</dbReference>
<dbReference type="GO" id="GO:0034059">
    <property type="term" value="P:response to anoxia"/>
    <property type="evidence" value="ECO:0000270"/>
    <property type="project" value="AgBase"/>
</dbReference>
<dbReference type="GO" id="GO:0005985">
    <property type="term" value="P:sucrose metabolic process"/>
    <property type="evidence" value="ECO:0007669"/>
    <property type="project" value="InterPro"/>
</dbReference>
<dbReference type="FunFam" id="1.20.120.1230:FF:000001">
    <property type="entry name" value="Sucrose synthase"/>
    <property type="match status" value="1"/>
</dbReference>
<dbReference type="FunFam" id="3.10.450.330:FF:000001">
    <property type="entry name" value="Sucrose synthase"/>
    <property type="match status" value="1"/>
</dbReference>
<dbReference type="FunFam" id="3.40.50.2000:FF:000004">
    <property type="entry name" value="Sucrose synthase"/>
    <property type="match status" value="1"/>
</dbReference>
<dbReference type="Gene3D" id="1.20.120.1230">
    <property type="match status" value="1"/>
</dbReference>
<dbReference type="Gene3D" id="3.10.450.330">
    <property type="match status" value="1"/>
</dbReference>
<dbReference type="Gene3D" id="3.40.50.2000">
    <property type="entry name" value="Glycogen Phosphorylase B"/>
    <property type="match status" value="2"/>
</dbReference>
<dbReference type="InterPro" id="IPR001296">
    <property type="entry name" value="Glyco_trans_1"/>
</dbReference>
<dbReference type="InterPro" id="IPR000368">
    <property type="entry name" value="Sucrose_synth_GT-B1"/>
</dbReference>
<dbReference type="InterPro" id="IPR012820">
    <property type="entry name" value="Sucrose_synthase_pln/cyn"/>
</dbReference>
<dbReference type="InterPro" id="IPR056736">
    <property type="entry name" value="SUS_EPBD"/>
</dbReference>
<dbReference type="InterPro" id="IPR056735">
    <property type="entry name" value="SUS_N"/>
</dbReference>
<dbReference type="NCBIfam" id="TIGR02470">
    <property type="entry name" value="sucr_synth"/>
    <property type="match status" value="1"/>
</dbReference>
<dbReference type="PANTHER" id="PTHR45839">
    <property type="match status" value="1"/>
</dbReference>
<dbReference type="PANTHER" id="PTHR45839:SF7">
    <property type="entry name" value="SUCROSE SYNTHASE 1"/>
    <property type="match status" value="1"/>
</dbReference>
<dbReference type="Pfam" id="PF00534">
    <property type="entry name" value="Glycos_transf_1"/>
    <property type="match status" value="1"/>
</dbReference>
<dbReference type="Pfam" id="PF00862">
    <property type="entry name" value="GT-B_Sucrose_synth"/>
    <property type="match status" value="1"/>
</dbReference>
<dbReference type="Pfam" id="PF24862">
    <property type="entry name" value="SUS_EPBD"/>
    <property type="match status" value="1"/>
</dbReference>
<dbReference type="Pfam" id="PF24861">
    <property type="entry name" value="SUS_N"/>
    <property type="match status" value="1"/>
</dbReference>
<dbReference type="SUPFAM" id="SSF53756">
    <property type="entry name" value="UDP-Glycosyltransferase/glycogen phosphorylase"/>
    <property type="match status" value="1"/>
</dbReference>
<feature type="chain" id="PRO_0000204652" description="Sucrose synthase 1">
    <location>
        <begin position="1"/>
        <end position="802"/>
    </location>
</feature>
<feature type="region of interest" description="GT-B glycosyltransferase" evidence="1">
    <location>
        <begin position="272"/>
        <end position="749"/>
    </location>
</feature>